<sequence length="105" mass="11901">MPGRKARRNAPLNPTRAELPPEFAAQLRKIGDKVYCTWSAPDITAVLAQMPGKKSRKSTMRRSPSPTRVPADLKDECDQLRRIGDKVNLRQKLLNFISKLFNLIT</sequence>
<reference key="1">
    <citation type="submission" date="2004-10" db="EMBL/GenBank/DDBJ databases">
        <authorList>
            <person name="Yakovlev A.G."/>
        </authorList>
    </citation>
    <scope>NUCLEOTIDE SEQUENCE [MRNA]</scope>
    <source>
        <strain>Sprague-Dawley</strain>
        <tissue>Embryonic brain</tissue>
    </source>
</reference>
<evidence type="ECO:0000250" key="1"/>
<evidence type="ECO:0000250" key="2">
    <source>
        <dbReference type="UniProtKB" id="Q13794"/>
    </source>
</evidence>
<evidence type="ECO:0000256" key="3">
    <source>
        <dbReference type="SAM" id="MobiDB-lite"/>
    </source>
</evidence>
<evidence type="ECO:0000305" key="4"/>
<keyword id="KW-0053">Apoptosis</keyword>
<keyword id="KW-0496">Mitochondrion</keyword>
<keyword id="KW-1185">Reference proteome</keyword>
<keyword id="KW-0677">Repeat</keyword>
<accession>Q5U777</accession>
<name>APR_RAT</name>
<organism>
    <name type="scientific">Rattus norvegicus</name>
    <name type="common">Rat</name>
    <dbReference type="NCBI Taxonomy" id="10116"/>
    <lineage>
        <taxon>Eukaryota</taxon>
        <taxon>Metazoa</taxon>
        <taxon>Chordata</taxon>
        <taxon>Craniata</taxon>
        <taxon>Vertebrata</taxon>
        <taxon>Euteleostomi</taxon>
        <taxon>Mammalia</taxon>
        <taxon>Eutheria</taxon>
        <taxon>Euarchontoglires</taxon>
        <taxon>Glires</taxon>
        <taxon>Rodentia</taxon>
        <taxon>Myomorpha</taxon>
        <taxon>Muroidea</taxon>
        <taxon>Muridae</taxon>
        <taxon>Murinae</taxon>
        <taxon>Rattus</taxon>
    </lineage>
</organism>
<feature type="chain" id="PRO_0000333231" description="Phorbol-12-myristate-13-acetate-induced protein 1">
    <location>
        <begin position="1"/>
        <end position="105"/>
    </location>
</feature>
<feature type="region of interest" description="Disordered" evidence="3">
    <location>
        <begin position="50"/>
        <end position="72"/>
    </location>
</feature>
<feature type="region of interest" description="Required for mitochondrial location" evidence="1">
    <location>
        <begin position="92"/>
        <end position="101"/>
    </location>
</feature>
<feature type="short sequence motif" description="BH3 1">
    <location>
        <begin position="27"/>
        <end position="35"/>
    </location>
</feature>
<feature type="short sequence motif" description="BH3 2">
    <location>
        <begin position="80"/>
        <end position="88"/>
    </location>
</feature>
<comment type="function">
    <text evidence="1">Promotes activation of caspases and apoptosis. Promotes mitochondrial membrane changes and efflux of apoptogenic proteins from the mitochondria. Contributes to p53/TP53-dependent apoptosis after radiation exposure. Promotes proteasomal degradation of MCL1. Competes with BAK1 and with BIM/BCL2L11 for binding to MCL1; can displace BAK1 and BIM/BCL2L11 from their binding sites (By similarity).</text>
</comment>
<comment type="subunit">
    <text evidence="2">Interacts with MCL1 (By similarity). Interacts with BCL2A1 (By similarity). Interacts with BAX (By similarity). Interacts with BCL2L10 (By similarity).</text>
</comment>
<comment type="subcellular location">
    <subcellularLocation>
        <location evidence="2">Mitochondrion</location>
    </subcellularLocation>
</comment>
<comment type="domain">
    <text evidence="1">The BH3 motif is essential for pro-apoptotic activity.</text>
</comment>
<comment type="similarity">
    <text evidence="4">Belongs to the PMAIP1 family.</text>
</comment>
<protein>
    <recommendedName>
        <fullName>Phorbol-12-myristate-13-acetate-induced protein 1</fullName>
    </recommendedName>
    <alternativeName>
        <fullName>Protein Noxa</fullName>
    </alternativeName>
</protein>
<gene>
    <name type="primary">Pmaip1</name>
    <name type="synonym">Noxa</name>
</gene>
<proteinExistence type="inferred from homology"/>
<dbReference type="EMBL" id="AY788892">
    <property type="protein sequence ID" value="AAV51955.1"/>
    <property type="molecule type" value="mRNA"/>
</dbReference>
<dbReference type="RefSeq" id="NP_001008386.1">
    <property type="nucleotide sequence ID" value="NM_001008385.2"/>
</dbReference>
<dbReference type="SMR" id="Q5U777"/>
<dbReference type="ComplexPortal" id="CPX-306">
    <property type="entry name" value="MCL1:PMAIP1 complex"/>
</dbReference>
<dbReference type="FunCoup" id="Q5U777">
    <property type="interactions" value="66"/>
</dbReference>
<dbReference type="STRING" id="10116.ENSRNOP00000025361"/>
<dbReference type="PhosphoSitePlus" id="Q5U777"/>
<dbReference type="PaxDb" id="10116-ENSRNOP00000025361"/>
<dbReference type="GeneID" id="492821"/>
<dbReference type="KEGG" id="rno:492821"/>
<dbReference type="UCSC" id="RGD:1359266">
    <property type="organism name" value="rat"/>
</dbReference>
<dbReference type="AGR" id="RGD:1359266"/>
<dbReference type="CTD" id="5366"/>
<dbReference type="RGD" id="1359266">
    <property type="gene designation" value="Pmaip1"/>
</dbReference>
<dbReference type="VEuPathDB" id="HostDB:ENSRNOG00000018770"/>
<dbReference type="eggNOG" id="ENOG502SEAE">
    <property type="taxonomic scope" value="Eukaryota"/>
</dbReference>
<dbReference type="HOGENOM" id="CLU_2262862_0_0_1"/>
<dbReference type="InParanoid" id="Q5U777"/>
<dbReference type="OrthoDB" id="85174at9989"/>
<dbReference type="TreeFam" id="TF339379"/>
<dbReference type="Reactome" id="R-RNO-111448">
    <property type="pathway name" value="Activation of NOXA and translocation to mitochondria"/>
</dbReference>
<dbReference type="Reactome" id="R-RNO-111453">
    <property type="pathway name" value="BH3-only proteins associate with and inactivate anti-apoptotic BCL-2 members"/>
</dbReference>
<dbReference type="PRO" id="PR:Q5U777"/>
<dbReference type="Proteomes" id="UP000002494">
    <property type="component" value="Chromosome 18"/>
</dbReference>
<dbReference type="Bgee" id="ENSRNOG00000018770">
    <property type="expression patterns" value="Expressed in thymus and 18 other cell types or tissues"/>
</dbReference>
<dbReference type="GO" id="GO:0097136">
    <property type="term" value="C:Bcl-2 family protein complex"/>
    <property type="evidence" value="ECO:0000266"/>
    <property type="project" value="RGD"/>
</dbReference>
<dbReference type="GO" id="GO:0005829">
    <property type="term" value="C:cytosol"/>
    <property type="evidence" value="ECO:0000266"/>
    <property type="project" value="RGD"/>
</dbReference>
<dbReference type="GO" id="GO:0005739">
    <property type="term" value="C:mitochondrion"/>
    <property type="evidence" value="ECO:0000266"/>
    <property type="project" value="RGD"/>
</dbReference>
<dbReference type="GO" id="GO:0005634">
    <property type="term" value="C:nucleus"/>
    <property type="evidence" value="ECO:0000266"/>
    <property type="project" value="RGD"/>
</dbReference>
<dbReference type="GO" id="GO:0006915">
    <property type="term" value="P:apoptotic process"/>
    <property type="evidence" value="ECO:0000266"/>
    <property type="project" value="RGD"/>
</dbReference>
<dbReference type="GO" id="GO:0042149">
    <property type="term" value="P:cellular response to glucose starvation"/>
    <property type="evidence" value="ECO:0000266"/>
    <property type="project" value="RGD"/>
</dbReference>
<dbReference type="GO" id="GO:0071456">
    <property type="term" value="P:cellular response to hypoxia"/>
    <property type="evidence" value="ECO:0000266"/>
    <property type="project" value="RGD"/>
</dbReference>
<dbReference type="GO" id="GO:0051607">
    <property type="term" value="P:defense response to virus"/>
    <property type="evidence" value="ECO:0000266"/>
    <property type="project" value="RGD"/>
</dbReference>
<dbReference type="GO" id="GO:0006974">
    <property type="term" value="P:DNA damage response"/>
    <property type="evidence" value="ECO:0000266"/>
    <property type="project" value="RGD"/>
</dbReference>
<dbReference type="GO" id="GO:0044346">
    <property type="term" value="P:fibroblast apoptotic process"/>
    <property type="evidence" value="ECO:0000266"/>
    <property type="project" value="RGD"/>
</dbReference>
<dbReference type="GO" id="GO:0097193">
    <property type="term" value="P:intrinsic apoptotic signaling pathway"/>
    <property type="evidence" value="ECO:0000266"/>
    <property type="project" value="RGD"/>
</dbReference>
<dbReference type="GO" id="GO:0072332">
    <property type="term" value="P:intrinsic apoptotic signaling pathway by p53 class mediator"/>
    <property type="evidence" value="ECO:0000266"/>
    <property type="project" value="RGD"/>
</dbReference>
<dbReference type="GO" id="GO:0008630">
    <property type="term" value="P:intrinsic apoptotic signaling pathway in response to DNA damage"/>
    <property type="evidence" value="ECO:0000266"/>
    <property type="project" value="RGD"/>
</dbReference>
<dbReference type="GO" id="GO:0042771">
    <property type="term" value="P:intrinsic apoptotic signaling pathway in response to DNA damage by p53 class mediator"/>
    <property type="evidence" value="ECO:0000266"/>
    <property type="project" value="RGD"/>
</dbReference>
<dbReference type="GO" id="GO:0070059">
    <property type="term" value="P:intrinsic apoptotic signaling pathway in response to endoplasmic reticulum stress"/>
    <property type="evidence" value="ECO:0000266"/>
    <property type="project" value="RGD"/>
</dbReference>
<dbReference type="GO" id="GO:0048147">
    <property type="term" value="P:negative regulation of fibroblast proliferation"/>
    <property type="evidence" value="ECO:0000266"/>
    <property type="project" value="RGD"/>
</dbReference>
<dbReference type="GO" id="GO:0010917">
    <property type="term" value="P:negative regulation of mitochondrial membrane potential"/>
    <property type="evidence" value="ECO:0000266"/>
    <property type="project" value="RGD"/>
</dbReference>
<dbReference type="GO" id="GO:0043065">
    <property type="term" value="P:positive regulation of apoptotic process"/>
    <property type="evidence" value="ECO:0000315"/>
    <property type="project" value="RGD"/>
</dbReference>
<dbReference type="GO" id="GO:0043517">
    <property type="term" value="P:positive regulation of DNA damage response, signal transduction by p53 class mediator"/>
    <property type="evidence" value="ECO:0000266"/>
    <property type="project" value="RGD"/>
</dbReference>
<dbReference type="GO" id="GO:1903749">
    <property type="term" value="P:positive regulation of establishment of protein localization to mitochondrion"/>
    <property type="evidence" value="ECO:0000266"/>
    <property type="project" value="RGD"/>
</dbReference>
<dbReference type="GO" id="GO:1902043">
    <property type="term" value="P:positive regulation of extrinsic apoptotic signaling pathway via death domain receptors"/>
    <property type="evidence" value="ECO:0000266"/>
    <property type="project" value="RGD"/>
</dbReference>
<dbReference type="GO" id="GO:2000271">
    <property type="term" value="P:positive regulation of fibroblast apoptotic process"/>
    <property type="evidence" value="ECO:0000266"/>
    <property type="project" value="RGD"/>
</dbReference>
<dbReference type="GO" id="GO:0010907">
    <property type="term" value="P:positive regulation of glucose metabolic process"/>
    <property type="evidence" value="ECO:0000266"/>
    <property type="project" value="RGD"/>
</dbReference>
<dbReference type="GO" id="GO:2001244">
    <property type="term" value="P:positive regulation of intrinsic apoptotic signaling pathway"/>
    <property type="evidence" value="ECO:0000266"/>
    <property type="project" value="RGD"/>
</dbReference>
<dbReference type="GO" id="GO:0043525">
    <property type="term" value="P:positive regulation of neuron apoptotic process"/>
    <property type="evidence" value="ECO:0000266"/>
    <property type="project" value="RGD"/>
</dbReference>
<dbReference type="GO" id="GO:0090200">
    <property type="term" value="P:positive regulation of release of cytochrome c from mitochondria"/>
    <property type="evidence" value="ECO:0000266"/>
    <property type="project" value="RGD"/>
</dbReference>
<dbReference type="GO" id="GO:0010498">
    <property type="term" value="P:proteasomal protein catabolic process"/>
    <property type="evidence" value="ECO:0000266"/>
    <property type="project" value="RGD"/>
</dbReference>
<dbReference type="GO" id="GO:0072593">
    <property type="term" value="P:reactive oxygen species metabolic process"/>
    <property type="evidence" value="ECO:0000266"/>
    <property type="project" value="RGD"/>
</dbReference>
<dbReference type="GO" id="GO:0046902">
    <property type="term" value="P:regulation of mitochondrial membrane permeability"/>
    <property type="evidence" value="ECO:0000266"/>
    <property type="project" value="RGD"/>
</dbReference>
<dbReference type="GO" id="GO:0001836">
    <property type="term" value="P:release of cytochrome c from mitochondria"/>
    <property type="evidence" value="ECO:0000266"/>
    <property type="project" value="RGD"/>
</dbReference>
<dbReference type="GO" id="GO:0043331">
    <property type="term" value="P:response to dsRNA"/>
    <property type="evidence" value="ECO:0000266"/>
    <property type="project" value="RGD"/>
</dbReference>
<dbReference type="GO" id="GO:0009411">
    <property type="term" value="P:response to UV"/>
    <property type="evidence" value="ECO:0000266"/>
    <property type="project" value="RGD"/>
</dbReference>
<dbReference type="GO" id="GO:0010165">
    <property type="term" value="P:response to X-ray"/>
    <property type="evidence" value="ECO:0000266"/>
    <property type="project" value="RGD"/>
</dbReference>
<dbReference type="GO" id="GO:0043029">
    <property type="term" value="P:T cell homeostasis"/>
    <property type="evidence" value="ECO:0000266"/>
    <property type="project" value="RGD"/>
</dbReference>
<dbReference type="InterPro" id="IPR024140">
    <property type="entry name" value="Noxa"/>
</dbReference>
<dbReference type="PANTHER" id="PTHR14299">
    <property type="entry name" value="PHORBOL-12-MYRISTATE-13-ACETATE-INDUCED PROTEIN 1"/>
    <property type="match status" value="1"/>
</dbReference>
<dbReference type="PANTHER" id="PTHR14299:SF0">
    <property type="entry name" value="PHORBOL-12-MYRISTATE-13-ACETATE-INDUCED PROTEIN 1"/>
    <property type="match status" value="1"/>
</dbReference>
<dbReference type="Pfam" id="PF15150">
    <property type="entry name" value="PMAIP1"/>
    <property type="match status" value="2"/>
</dbReference>